<name>FEOC_SALTI</name>
<organism>
    <name type="scientific">Salmonella typhi</name>
    <dbReference type="NCBI Taxonomy" id="90370"/>
    <lineage>
        <taxon>Bacteria</taxon>
        <taxon>Pseudomonadati</taxon>
        <taxon>Pseudomonadota</taxon>
        <taxon>Gammaproteobacteria</taxon>
        <taxon>Enterobacterales</taxon>
        <taxon>Enterobacteriaceae</taxon>
        <taxon>Salmonella</taxon>
    </lineage>
</organism>
<proteinExistence type="inferred from homology"/>
<sequence>MASLIQVRDLLALRGRMEATQISHTLHAPQPMIDAMLNQLEIMGKAVRIPEEPDGCLSGSCKSCPEGKACLREWWALR</sequence>
<accession>Q8XG51</accession>
<accession>Q7ALV3</accession>
<comment type="function">
    <text evidence="1">May function as a transcriptional regulator that controls feoABC expression.</text>
</comment>
<comment type="similarity">
    <text evidence="1">Belongs to the FeoC family.</text>
</comment>
<keyword id="KW-0238">DNA-binding</keyword>
<keyword id="KW-0408">Iron</keyword>
<keyword id="KW-0411">Iron-sulfur</keyword>
<keyword id="KW-0479">Metal-binding</keyword>
<keyword id="KW-0678">Repressor</keyword>
<keyword id="KW-0804">Transcription</keyword>
<keyword id="KW-0805">Transcription regulation</keyword>
<dbReference type="EMBL" id="AL513382">
    <property type="protein sequence ID" value="CAD08107.1"/>
    <property type="molecule type" value="Genomic_DNA"/>
</dbReference>
<dbReference type="EMBL" id="AE014613">
    <property type="protein sequence ID" value="AAO71469.1"/>
    <property type="molecule type" value="Genomic_DNA"/>
</dbReference>
<dbReference type="RefSeq" id="NP_458397.1">
    <property type="nucleotide sequence ID" value="NC_003198.1"/>
</dbReference>
<dbReference type="RefSeq" id="WP_000157589.1">
    <property type="nucleotide sequence ID" value="NZ_WSUR01000001.1"/>
</dbReference>
<dbReference type="SMR" id="Q8XG51"/>
<dbReference type="STRING" id="220341.gene:17588120"/>
<dbReference type="KEGG" id="stt:t3999"/>
<dbReference type="KEGG" id="sty:STY4289"/>
<dbReference type="PATRIC" id="fig|220341.7.peg.4383"/>
<dbReference type="eggNOG" id="ENOG50330S2">
    <property type="taxonomic scope" value="Bacteria"/>
</dbReference>
<dbReference type="HOGENOM" id="CLU_189182_0_0_6"/>
<dbReference type="OMA" id="HTPQPMI"/>
<dbReference type="Proteomes" id="UP000000541">
    <property type="component" value="Chromosome"/>
</dbReference>
<dbReference type="Proteomes" id="UP000002670">
    <property type="component" value="Chromosome"/>
</dbReference>
<dbReference type="GO" id="GO:0003677">
    <property type="term" value="F:DNA binding"/>
    <property type="evidence" value="ECO:0007669"/>
    <property type="project" value="UniProtKB-KW"/>
</dbReference>
<dbReference type="GO" id="GO:0005506">
    <property type="term" value="F:iron ion binding"/>
    <property type="evidence" value="ECO:0007669"/>
    <property type="project" value="UniProtKB-UniRule"/>
</dbReference>
<dbReference type="GO" id="GO:0051536">
    <property type="term" value="F:iron-sulfur cluster binding"/>
    <property type="evidence" value="ECO:0007669"/>
    <property type="project" value="UniProtKB-KW"/>
</dbReference>
<dbReference type="Gene3D" id="1.10.10.10">
    <property type="entry name" value="Winged helix-like DNA-binding domain superfamily/Winged helix DNA-binding domain"/>
    <property type="match status" value="1"/>
</dbReference>
<dbReference type="HAMAP" id="MF_01586">
    <property type="entry name" value="FeoC"/>
    <property type="match status" value="1"/>
</dbReference>
<dbReference type="InterPro" id="IPR023732">
    <property type="entry name" value="FeoC"/>
</dbReference>
<dbReference type="InterPro" id="IPR015102">
    <property type="entry name" value="Tscrpt_reg_HTH_FeoC"/>
</dbReference>
<dbReference type="InterPro" id="IPR036388">
    <property type="entry name" value="WH-like_DNA-bd_sf"/>
</dbReference>
<dbReference type="InterPro" id="IPR036390">
    <property type="entry name" value="WH_DNA-bd_sf"/>
</dbReference>
<dbReference type="NCBIfam" id="NF011960">
    <property type="entry name" value="PRK15431.1"/>
    <property type="match status" value="1"/>
</dbReference>
<dbReference type="Pfam" id="PF09012">
    <property type="entry name" value="FeoC"/>
    <property type="match status" value="1"/>
</dbReference>
<dbReference type="SUPFAM" id="SSF46785">
    <property type="entry name" value="Winged helix' DNA-binding domain"/>
    <property type="match status" value="1"/>
</dbReference>
<gene>
    <name evidence="1" type="primary">feoC</name>
    <name type="ordered locus">STY4289</name>
    <name type="ordered locus">t3999</name>
</gene>
<protein>
    <recommendedName>
        <fullName evidence="1">Probable [Fe-S]-dependent transcriptional repressor</fullName>
    </recommendedName>
</protein>
<reference key="1">
    <citation type="journal article" date="2001" name="Nature">
        <title>Complete genome sequence of a multiple drug resistant Salmonella enterica serovar Typhi CT18.</title>
        <authorList>
            <person name="Parkhill J."/>
            <person name="Dougan G."/>
            <person name="James K.D."/>
            <person name="Thomson N.R."/>
            <person name="Pickard D."/>
            <person name="Wain J."/>
            <person name="Churcher C.M."/>
            <person name="Mungall K.L."/>
            <person name="Bentley S.D."/>
            <person name="Holden M.T.G."/>
            <person name="Sebaihia M."/>
            <person name="Baker S."/>
            <person name="Basham D."/>
            <person name="Brooks K."/>
            <person name="Chillingworth T."/>
            <person name="Connerton P."/>
            <person name="Cronin A."/>
            <person name="Davis P."/>
            <person name="Davies R.M."/>
            <person name="Dowd L."/>
            <person name="White N."/>
            <person name="Farrar J."/>
            <person name="Feltwell T."/>
            <person name="Hamlin N."/>
            <person name="Haque A."/>
            <person name="Hien T.T."/>
            <person name="Holroyd S."/>
            <person name="Jagels K."/>
            <person name="Krogh A."/>
            <person name="Larsen T.S."/>
            <person name="Leather S."/>
            <person name="Moule S."/>
            <person name="O'Gaora P."/>
            <person name="Parry C."/>
            <person name="Quail M.A."/>
            <person name="Rutherford K.M."/>
            <person name="Simmonds M."/>
            <person name="Skelton J."/>
            <person name="Stevens K."/>
            <person name="Whitehead S."/>
            <person name="Barrell B.G."/>
        </authorList>
    </citation>
    <scope>NUCLEOTIDE SEQUENCE [LARGE SCALE GENOMIC DNA]</scope>
    <source>
        <strain>CT18</strain>
    </source>
</reference>
<reference key="2">
    <citation type="journal article" date="2003" name="J. Bacteriol.">
        <title>Comparative genomics of Salmonella enterica serovar Typhi strains Ty2 and CT18.</title>
        <authorList>
            <person name="Deng W."/>
            <person name="Liou S.-R."/>
            <person name="Plunkett G. III"/>
            <person name="Mayhew G.F."/>
            <person name="Rose D.J."/>
            <person name="Burland V."/>
            <person name="Kodoyianni V."/>
            <person name="Schwartz D.C."/>
            <person name="Blattner F.R."/>
        </authorList>
    </citation>
    <scope>NUCLEOTIDE SEQUENCE [LARGE SCALE GENOMIC DNA]</scope>
    <source>
        <strain>ATCC 700931 / Ty2</strain>
    </source>
</reference>
<feature type="chain" id="PRO_0000313065" description="Probable [Fe-S]-dependent transcriptional repressor">
    <location>
        <begin position="1"/>
        <end position="78"/>
    </location>
</feature>
<feature type="binding site" evidence="1">
    <location>
        <position position="56"/>
    </location>
    <ligand>
        <name>iron-sulfur cluster</name>
        <dbReference type="ChEBI" id="CHEBI:30408"/>
    </ligand>
</feature>
<feature type="binding site" evidence="1">
    <location>
        <position position="61"/>
    </location>
    <ligand>
        <name>iron-sulfur cluster</name>
        <dbReference type="ChEBI" id="CHEBI:30408"/>
    </ligand>
</feature>
<feature type="binding site" evidence="1">
    <location>
        <position position="64"/>
    </location>
    <ligand>
        <name>iron-sulfur cluster</name>
        <dbReference type="ChEBI" id="CHEBI:30408"/>
    </ligand>
</feature>
<feature type="binding site" evidence="1">
    <location>
        <position position="70"/>
    </location>
    <ligand>
        <name>iron-sulfur cluster</name>
        <dbReference type="ChEBI" id="CHEBI:30408"/>
    </ligand>
</feature>
<evidence type="ECO:0000255" key="1">
    <source>
        <dbReference type="HAMAP-Rule" id="MF_01586"/>
    </source>
</evidence>